<evidence type="ECO:0000255" key="1">
    <source>
        <dbReference type="HAMAP-Rule" id="MF_00823"/>
    </source>
</evidence>
<evidence type="ECO:0000255" key="2">
    <source>
        <dbReference type="PROSITE-ProRule" id="PRU01137"/>
    </source>
</evidence>
<name>ACCA_CARHZ</name>
<protein>
    <recommendedName>
        <fullName evidence="1">Acetyl-coenzyme A carboxylase carboxyl transferase subunit alpha</fullName>
        <shortName evidence="1">ACCase subunit alpha</shortName>
        <shortName evidence="1">Acetyl-CoA carboxylase carboxyltransferase subunit alpha</shortName>
        <ecNumber evidence="1">2.1.3.15</ecNumber>
    </recommendedName>
</protein>
<gene>
    <name evidence="1" type="primary">accA</name>
    <name type="ordered locus">CHY_1142</name>
</gene>
<keyword id="KW-0067">ATP-binding</keyword>
<keyword id="KW-0963">Cytoplasm</keyword>
<keyword id="KW-0275">Fatty acid biosynthesis</keyword>
<keyword id="KW-0276">Fatty acid metabolism</keyword>
<keyword id="KW-0444">Lipid biosynthesis</keyword>
<keyword id="KW-0443">Lipid metabolism</keyword>
<keyword id="KW-0547">Nucleotide-binding</keyword>
<keyword id="KW-1185">Reference proteome</keyword>
<keyword id="KW-0808">Transferase</keyword>
<sequence length="323" mass="35820">MANFLFEFEKPLVELENKISDLKKFAEEKNIDVSRELELLSAKAQQLAKEIYQNLTPWQRVLLARHPERPNTRDYINYLCDDFIELKGDRRFGDDPAMIGGIGIIENIPVTIVGNLKGKDTKENIMRNFGMAHPEGYRKAIRLFKQAEKFGRPVLTFIDTPGAFCGIGAEERGQFQAIAEAIATLISLKTPVLAVITGEGGSGGALALAAGDKLLMLENAVFSVIAPESFAAILWKDSSRAQEASELLKLTSEHLLEFGLIDGIIPEPLGGAHRNPAETLKAVKEEVVKNLQILKETPVEELLRRRYQRYRYIGSGIVEGGVS</sequence>
<reference key="1">
    <citation type="journal article" date="2005" name="PLoS Genet.">
        <title>Life in hot carbon monoxide: the complete genome sequence of Carboxydothermus hydrogenoformans Z-2901.</title>
        <authorList>
            <person name="Wu M."/>
            <person name="Ren Q."/>
            <person name="Durkin A.S."/>
            <person name="Daugherty S.C."/>
            <person name="Brinkac L.M."/>
            <person name="Dodson R.J."/>
            <person name="Madupu R."/>
            <person name="Sullivan S.A."/>
            <person name="Kolonay J.F."/>
            <person name="Nelson W.C."/>
            <person name="Tallon L.J."/>
            <person name="Jones K.M."/>
            <person name="Ulrich L.E."/>
            <person name="Gonzalez J.M."/>
            <person name="Zhulin I.B."/>
            <person name="Robb F.T."/>
            <person name="Eisen J.A."/>
        </authorList>
    </citation>
    <scope>NUCLEOTIDE SEQUENCE [LARGE SCALE GENOMIC DNA]</scope>
    <source>
        <strain>ATCC BAA-161 / DSM 6008 / Z-2901</strain>
    </source>
</reference>
<organism>
    <name type="scientific">Carboxydothermus hydrogenoformans (strain ATCC BAA-161 / DSM 6008 / Z-2901)</name>
    <dbReference type="NCBI Taxonomy" id="246194"/>
    <lineage>
        <taxon>Bacteria</taxon>
        <taxon>Bacillati</taxon>
        <taxon>Bacillota</taxon>
        <taxon>Clostridia</taxon>
        <taxon>Thermoanaerobacterales</taxon>
        <taxon>Thermoanaerobacteraceae</taxon>
        <taxon>Carboxydothermus</taxon>
    </lineage>
</organism>
<comment type="function">
    <text evidence="1">Component of the acetyl coenzyme A carboxylase (ACC) complex. First, biotin carboxylase catalyzes the carboxylation of biotin on its carrier protein (BCCP) and then the CO(2) group is transferred by the carboxyltransferase to acetyl-CoA to form malonyl-CoA.</text>
</comment>
<comment type="catalytic activity">
    <reaction evidence="1">
        <text>N(6)-carboxybiotinyl-L-lysyl-[protein] + acetyl-CoA = N(6)-biotinyl-L-lysyl-[protein] + malonyl-CoA</text>
        <dbReference type="Rhea" id="RHEA:54728"/>
        <dbReference type="Rhea" id="RHEA-COMP:10505"/>
        <dbReference type="Rhea" id="RHEA-COMP:10506"/>
        <dbReference type="ChEBI" id="CHEBI:57288"/>
        <dbReference type="ChEBI" id="CHEBI:57384"/>
        <dbReference type="ChEBI" id="CHEBI:83144"/>
        <dbReference type="ChEBI" id="CHEBI:83145"/>
        <dbReference type="EC" id="2.1.3.15"/>
    </reaction>
</comment>
<comment type="pathway">
    <text evidence="1">Lipid metabolism; malonyl-CoA biosynthesis; malonyl-CoA from acetyl-CoA: step 1/1.</text>
</comment>
<comment type="subunit">
    <text evidence="1">Acetyl-CoA carboxylase is a heterohexamer composed of biotin carboxyl carrier protein (AccB), biotin carboxylase (AccC) and two subunits each of ACCase subunit alpha (AccA) and ACCase subunit beta (AccD).</text>
</comment>
<comment type="subcellular location">
    <subcellularLocation>
        <location evidence="1">Cytoplasm</location>
    </subcellularLocation>
</comment>
<comment type="similarity">
    <text evidence="1">Belongs to the AccA family.</text>
</comment>
<proteinExistence type="inferred from homology"/>
<accession>Q3ACZ7</accession>
<feature type="chain" id="PRO_0000223749" description="Acetyl-coenzyme A carboxylase carboxyl transferase subunit alpha">
    <location>
        <begin position="1"/>
        <end position="323"/>
    </location>
</feature>
<feature type="domain" description="CoA carboxyltransferase C-terminal" evidence="2">
    <location>
        <begin position="36"/>
        <end position="293"/>
    </location>
</feature>
<dbReference type="EC" id="2.1.3.15" evidence="1"/>
<dbReference type="EMBL" id="CP000141">
    <property type="protein sequence ID" value="ABB15723.1"/>
    <property type="molecule type" value="Genomic_DNA"/>
</dbReference>
<dbReference type="RefSeq" id="WP_011344063.1">
    <property type="nucleotide sequence ID" value="NC_007503.1"/>
</dbReference>
<dbReference type="SMR" id="Q3ACZ7"/>
<dbReference type="FunCoup" id="Q3ACZ7">
    <property type="interactions" value="252"/>
</dbReference>
<dbReference type="STRING" id="246194.CHY_1142"/>
<dbReference type="KEGG" id="chy:CHY_1142"/>
<dbReference type="eggNOG" id="COG0825">
    <property type="taxonomic scope" value="Bacteria"/>
</dbReference>
<dbReference type="HOGENOM" id="CLU_015486_0_2_9"/>
<dbReference type="InParanoid" id="Q3ACZ7"/>
<dbReference type="OrthoDB" id="9808023at2"/>
<dbReference type="UniPathway" id="UPA00655">
    <property type="reaction ID" value="UER00711"/>
</dbReference>
<dbReference type="Proteomes" id="UP000002706">
    <property type="component" value="Chromosome"/>
</dbReference>
<dbReference type="GO" id="GO:0009317">
    <property type="term" value="C:acetyl-CoA carboxylase complex"/>
    <property type="evidence" value="ECO:0007669"/>
    <property type="project" value="InterPro"/>
</dbReference>
<dbReference type="GO" id="GO:0003989">
    <property type="term" value="F:acetyl-CoA carboxylase activity"/>
    <property type="evidence" value="ECO:0007669"/>
    <property type="project" value="InterPro"/>
</dbReference>
<dbReference type="GO" id="GO:0005524">
    <property type="term" value="F:ATP binding"/>
    <property type="evidence" value="ECO:0007669"/>
    <property type="project" value="UniProtKB-KW"/>
</dbReference>
<dbReference type="GO" id="GO:0016743">
    <property type="term" value="F:carboxyl- or carbamoyltransferase activity"/>
    <property type="evidence" value="ECO:0007669"/>
    <property type="project" value="UniProtKB-UniRule"/>
</dbReference>
<dbReference type="GO" id="GO:0006633">
    <property type="term" value="P:fatty acid biosynthetic process"/>
    <property type="evidence" value="ECO:0007669"/>
    <property type="project" value="UniProtKB-KW"/>
</dbReference>
<dbReference type="GO" id="GO:2001295">
    <property type="term" value="P:malonyl-CoA biosynthetic process"/>
    <property type="evidence" value="ECO:0007669"/>
    <property type="project" value="UniProtKB-UniRule"/>
</dbReference>
<dbReference type="Gene3D" id="3.90.226.10">
    <property type="entry name" value="2-enoyl-CoA Hydratase, Chain A, domain 1"/>
    <property type="match status" value="1"/>
</dbReference>
<dbReference type="HAMAP" id="MF_00823">
    <property type="entry name" value="AcetylCoA_CT_alpha"/>
    <property type="match status" value="1"/>
</dbReference>
<dbReference type="InterPro" id="IPR001095">
    <property type="entry name" value="Acetyl_CoA_COase_a_su"/>
</dbReference>
<dbReference type="InterPro" id="IPR029045">
    <property type="entry name" value="ClpP/crotonase-like_dom_sf"/>
</dbReference>
<dbReference type="InterPro" id="IPR011763">
    <property type="entry name" value="COA_CT_C"/>
</dbReference>
<dbReference type="NCBIfam" id="TIGR00513">
    <property type="entry name" value="accA"/>
    <property type="match status" value="1"/>
</dbReference>
<dbReference type="NCBIfam" id="NF041504">
    <property type="entry name" value="AccA_sub"/>
    <property type="match status" value="1"/>
</dbReference>
<dbReference type="NCBIfam" id="NF004344">
    <property type="entry name" value="PRK05724.1"/>
    <property type="match status" value="1"/>
</dbReference>
<dbReference type="PANTHER" id="PTHR42853">
    <property type="entry name" value="ACETYL-COENZYME A CARBOXYLASE CARBOXYL TRANSFERASE SUBUNIT ALPHA"/>
    <property type="match status" value="1"/>
</dbReference>
<dbReference type="PANTHER" id="PTHR42853:SF3">
    <property type="entry name" value="ACETYL-COENZYME A CARBOXYLASE CARBOXYL TRANSFERASE SUBUNIT ALPHA, CHLOROPLASTIC"/>
    <property type="match status" value="1"/>
</dbReference>
<dbReference type="Pfam" id="PF03255">
    <property type="entry name" value="ACCA"/>
    <property type="match status" value="1"/>
</dbReference>
<dbReference type="PRINTS" id="PR01069">
    <property type="entry name" value="ACCCTRFRASEA"/>
</dbReference>
<dbReference type="SUPFAM" id="SSF52096">
    <property type="entry name" value="ClpP/crotonase"/>
    <property type="match status" value="1"/>
</dbReference>
<dbReference type="PROSITE" id="PS50989">
    <property type="entry name" value="COA_CT_CTER"/>
    <property type="match status" value="1"/>
</dbReference>